<dbReference type="EMBL" id="FM180568">
    <property type="protein sequence ID" value="CAS10342.1"/>
    <property type="molecule type" value="Genomic_DNA"/>
</dbReference>
<dbReference type="RefSeq" id="WP_012578982.1">
    <property type="nucleotide sequence ID" value="NC_011601.1"/>
</dbReference>
<dbReference type="SMR" id="B7UGV7"/>
<dbReference type="KEGG" id="ecg:E2348C_2794"/>
<dbReference type="HOGENOM" id="CLU_016077_6_2_6"/>
<dbReference type="Proteomes" id="UP000008205">
    <property type="component" value="Chromosome"/>
</dbReference>
<dbReference type="GO" id="GO:0005525">
    <property type="term" value="F:GTP binding"/>
    <property type="evidence" value="ECO:0007669"/>
    <property type="project" value="UniProtKB-UniRule"/>
</dbReference>
<dbReference type="GO" id="GO:0043022">
    <property type="term" value="F:ribosome binding"/>
    <property type="evidence" value="ECO:0007669"/>
    <property type="project" value="TreeGrafter"/>
</dbReference>
<dbReference type="GO" id="GO:0042254">
    <property type="term" value="P:ribosome biogenesis"/>
    <property type="evidence" value="ECO:0007669"/>
    <property type="project" value="UniProtKB-KW"/>
</dbReference>
<dbReference type="CDD" id="cd01894">
    <property type="entry name" value="EngA1"/>
    <property type="match status" value="1"/>
</dbReference>
<dbReference type="CDD" id="cd01895">
    <property type="entry name" value="EngA2"/>
    <property type="match status" value="1"/>
</dbReference>
<dbReference type="FunFam" id="3.30.300.20:FF:000004">
    <property type="entry name" value="GTPase Der"/>
    <property type="match status" value="1"/>
</dbReference>
<dbReference type="FunFam" id="3.40.50.300:FF:000040">
    <property type="entry name" value="GTPase Der"/>
    <property type="match status" value="1"/>
</dbReference>
<dbReference type="FunFam" id="3.40.50.300:FF:000057">
    <property type="entry name" value="GTPase Der"/>
    <property type="match status" value="1"/>
</dbReference>
<dbReference type="Gene3D" id="3.30.300.20">
    <property type="match status" value="1"/>
</dbReference>
<dbReference type="Gene3D" id="3.40.50.300">
    <property type="entry name" value="P-loop containing nucleotide triphosphate hydrolases"/>
    <property type="match status" value="2"/>
</dbReference>
<dbReference type="HAMAP" id="MF_00195">
    <property type="entry name" value="GTPase_Der"/>
    <property type="match status" value="1"/>
</dbReference>
<dbReference type="InterPro" id="IPR031166">
    <property type="entry name" value="G_ENGA"/>
</dbReference>
<dbReference type="InterPro" id="IPR006073">
    <property type="entry name" value="GTP-bd"/>
</dbReference>
<dbReference type="InterPro" id="IPR016484">
    <property type="entry name" value="GTPase_Der"/>
</dbReference>
<dbReference type="InterPro" id="IPR032859">
    <property type="entry name" value="KH_dom-like"/>
</dbReference>
<dbReference type="InterPro" id="IPR015946">
    <property type="entry name" value="KH_dom-like_a/b"/>
</dbReference>
<dbReference type="InterPro" id="IPR027417">
    <property type="entry name" value="P-loop_NTPase"/>
</dbReference>
<dbReference type="InterPro" id="IPR005225">
    <property type="entry name" value="Small_GTP-bd"/>
</dbReference>
<dbReference type="NCBIfam" id="TIGR03594">
    <property type="entry name" value="GTPase_EngA"/>
    <property type="match status" value="1"/>
</dbReference>
<dbReference type="NCBIfam" id="TIGR00231">
    <property type="entry name" value="small_GTP"/>
    <property type="match status" value="2"/>
</dbReference>
<dbReference type="PANTHER" id="PTHR43834">
    <property type="entry name" value="GTPASE DER"/>
    <property type="match status" value="1"/>
</dbReference>
<dbReference type="PANTHER" id="PTHR43834:SF6">
    <property type="entry name" value="GTPASE DER"/>
    <property type="match status" value="1"/>
</dbReference>
<dbReference type="Pfam" id="PF14714">
    <property type="entry name" value="KH_dom-like"/>
    <property type="match status" value="1"/>
</dbReference>
<dbReference type="Pfam" id="PF01926">
    <property type="entry name" value="MMR_HSR1"/>
    <property type="match status" value="2"/>
</dbReference>
<dbReference type="PIRSF" id="PIRSF006485">
    <property type="entry name" value="GTP-binding_EngA"/>
    <property type="match status" value="1"/>
</dbReference>
<dbReference type="PRINTS" id="PR00326">
    <property type="entry name" value="GTP1OBG"/>
</dbReference>
<dbReference type="SUPFAM" id="SSF52540">
    <property type="entry name" value="P-loop containing nucleoside triphosphate hydrolases"/>
    <property type="match status" value="2"/>
</dbReference>
<dbReference type="PROSITE" id="PS51712">
    <property type="entry name" value="G_ENGA"/>
    <property type="match status" value="2"/>
</dbReference>
<feature type="chain" id="PRO_1000124356" description="GTPase Der">
    <location>
        <begin position="1"/>
        <end position="490"/>
    </location>
</feature>
<feature type="domain" description="EngA-type G 1">
    <location>
        <begin position="3"/>
        <end position="166"/>
    </location>
</feature>
<feature type="domain" description="EngA-type G 2">
    <location>
        <begin position="203"/>
        <end position="376"/>
    </location>
</feature>
<feature type="domain" description="KH-like" evidence="1">
    <location>
        <begin position="377"/>
        <end position="461"/>
    </location>
</feature>
<feature type="binding site" evidence="1">
    <location>
        <begin position="9"/>
        <end position="16"/>
    </location>
    <ligand>
        <name>GTP</name>
        <dbReference type="ChEBI" id="CHEBI:37565"/>
        <label>1</label>
    </ligand>
</feature>
<feature type="binding site" evidence="1">
    <location>
        <begin position="56"/>
        <end position="60"/>
    </location>
    <ligand>
        <name>GTP</name>
        <dbReference type="ChEBI" id="CHEBI:37565"/>
        <label>1</label>
    </ligand>
</feature>
<feature type="binding site" evidence="1">
    <location>
        <begin position="118"/>
        <end position="121"/>
    </location>
    <ligand>
        <name>GTP</name>
        <dbReference type="ChEBI" id="CHEBI:37565"/>
        <label>1</label>
    </ligand>
</feature>
<feature type="binding site" evidence="1">
    <location>
        <begin position="209"/>
        <end position="216"/>
    </location>
    <ligand>
        <name>GTP</name>
        <dbReference type="ChEBI" id="CHEBI:37565"/>
        <label>2</label>
    </ligand>
</feature>
<feature type="binding site" evidence="1">
    <location>
        <begin position="256"/>
        <end position="260"/>
    </location>
    <ligand>
        <name>GTP</name>
        <dbReference type="ChEBI" id="CHEBI:37565"/>
        <label>2</label>
    </ligand>
</feature>
<feature type="binding site" evidence="1">
    <location>
        <begin position="321"/>
        <end position="324"/>
    </location>
    <ligand>
        <name>GTP</name>
        <dbReference type="ChEBI" id="CHEBI:37565"/>
        <label>2</label>
    </ligand>
</feature>
<comment type="function">
    <text evidence="1">GTPase that plays an essential role in the late steps of ribosome biogenesis.</text>
</comment>
<comment type="subunit">
    <text evidence="1">Associates with the 50S ribosomal subunit.</text>
</comment>
<comment type="similarity">
    <text evidence="1">Belongs to the TRAFAC class TrmE-Era-EngA-EngB-Septin-like GTPase superfamily. EngA (Der) GTPase family.</text>
</comment>
<gene>
    <name evidence="1" type="primary">der</name>
    <name type="synonym">engA</name>
    <name type="ordered locus">E2348C_2794</name>
</gene>
<keyword id="KW-0342">GTP-binding</keyword>
<keyword id="KW-0547">Nucleotide-binding</keyword>
<keyword id="KW-1185">Reference proteome</keyword>
<keyword id="KW-0677">Repeat</keyword>
<keyword id="KW-0690">Ribosome biogenesis</keyword>
<name>DER_ECO27</name>
<sequence>MVPVVALVGRPNVGKSTLFNRLTRTRDALVADFPGLTRDRKYGRAEIEGREFICIDTGGIDGTEDGVETRMAEQSLLAIEEADVVLFMVDARAGLMPADEAIAKHLRSREKPTFLVANKTDGLDPDQAVVDFYALGLGEIYPIAASHGRGVLSLLEHVLLPWMEDLAPQEEVDEDAEYWAQFEAEENGEEEEEDDFDPQSLPIKLAIVGRPNVGKSTLTNRILGEERVVVYDMPGTTRDSIYIPMERDGREYVLIDTAGVRKRGKITDAVEKFSVIKTLQAIEDANVVMLVIDAREGISDQDLSLLGFILNSGRSLVIVVNKWDGLSQEVKEQVKETLDFRLGFIDFARVHFISALHGSGVGNLFESVREAYDSSTRRVGTSMLTRIMTMAVEDHQPPLVRGRRVKLKYAHAGGYNPPIVVIHGNQVKDLSDSYKRYLMNYFRKSLDVMGSPIRIQFKEGENPYANKRNTLTPTQMRKRKRLMKHIKKSK</sequence>
<accession>B7UGV7</accession>
<protein>
    <recommendedName>
        <fullName evidence="1">GTPase Der</fullName>
    </recommendedName>
    <alternativeName>
        <fullName evidence="1">GTP-binding protein EngA</fullName>
    </alternativeName>
</protein>
<reference key="1">
    <citation type="journal article" date="2009" name="J. Bacteriol.">
        <title>Complete genome sequence and comparative genome analysis of enteropathogenic Escherichia coli O127:H6 strain E2348/69.</title>
        <authorList>
            <person name="Iguchi A."/>
            <person name="Thomson N.R."/>
            <person name="Ogura Y."/>
            <person name="Saunders D."/>
            <person name="Ooka T."/>
            <person name="Henderson I.R."/>
            <person name="Harris D."/>
            <person name="Asadulghani M."/>
            <person name="Kurokawa K."/>
            <person name="Dean P."/>
            <person name="Kenny B."/>
            <person name="Quail M.A."/>
            <person name="Thurston S."/>
            <person name="Dougan G."/>
            <person name="Hayashi T."/>
            <person name="Parkhill J."/>
            <person name="Frankel G."/>
        </authorList>
    </citation>
    <scope>NUCLEOTIDE SEQUENCE [LARGE SCALE GENOMIC DNA]</scope>
    <source>
        <strain>E2348/69 / EPEC</strain>
    </source>
</reference>
<proteinExistence type="inferred from homology"/>
<evidence type="ECO:0000255" key="1">
    <source>
        <dbReference type="HAMAP-Rule" id="MF_00195"/>
    </source>
</evidence>
<organism>
    <name type="scientific">Escherichia coli O127:H6 (strain E2348/69 / EPEC)</name>
    <dbReference type="NCBI Taxonomy" id="574521"/>
    <lineage>
        <taxon>Bacteria</taxon>
        <taxon>Pseudomonadati</taxon>
        <taxon>Pseudomonadota</taxon>
        <taxon>Gammaproteobacteria</taxon>
        <taxon>Enterobacterales</taxon>
        <taxon>Enterobacteriaceae</taxon>
        <taxon>Escherichia</taxon>
    </lineage>
</organism>